<proteinExistence type="evidence at protein level"/>
<name>TRM7_SCHPO</name>
<protein>
    <recommendedName>
        <fullName evidence="4">tRNA (cytidine(32)/guanosine(34)-2'-O)-methyltransferase</fullName>
        <ecNumber evidence="1 5">2.1.1.205</ecNumber>
    </recommendedName>
    <alternativeName>
        <fullName evidence="1">2'-O-ribose RNA methyltransferase TRM7 homolog</fullName>
    </alternativeName>
</protein>
<evidence type="ECO:0000255" key="1">
    <source>
        <dbReference type="HAMAP-Rule" id="MF_03162"/>
    </source>
</evidence>
<evidence type="ECO:0000269" key="2">
    <source>
    </source>
</evidence>
<evidence type="ECO:0000269" key="3">
    <source>
    </source>
</evidence>
<evidence type="ECO:0000305" key="4"/>
<evidence type="ECO:0000305" key="5">
    <source>
    </source>
</evidence>
<evidence type="ECO:0000312" key="6">
    <source>
        <dbReference type="PomBase" id="SPAC4F10.03c"/>
    </source>
</evidence>
<comment type="function">
    <text evidence="2">Methylates the 2'-O-ribose of nucleotides at positions 32 and 34 of the tRNA anticodon loop of substrate tRNAs (PubMed:25404562). Requires trm732 for methylation of the cytidine at position 32 of the anticodon loop of substrate tRNAs (PubMed:25404562). Requires trm734 for methylation of the nucleotide at position 34 of the anticodon loop of substrate tRNAs (PubMed:25404562). Methylates tRNA(Phe) (PubMed:25404562).</text>
</comment>
<comment type="catalytic activity">
    <reaction evidence="1 5">
        <text>cytidine(32)/guanosine(34) in tRNA + 2 S-adenosyl-L-methionine = 2'-O-methylcytidine(32)/2'-O-methylguanosine(34) in tRNA + 2 S-adenosyl-L-homocysteine + 2 H(+)</text>
        <dbReference type="Rhea" id="RHEA:42396"/>
        <dbReference type="Rhea" id="RHEA-COMP:10246"/>
        <dbReference type="Rhea" id="RHEA-COMP:10247"/>
        <dbReference type="ChEBI" id="CHEBI:15378"/>
        <dbReference type="ChEBI" id="CHEBI:57856"/>
        <dbReference type="ChEBI" id="CHEBI:59789"/>
        <dbReference type="ChEBI" id="CHEBI:74269"/>
        <dbReference type="ChEBI" id="CHEBI:74445"/>
        <dbReference type="ChEBI" id="CHEBI:74495"/>
        <dbReference type="ChEBI" id="CHEBI:82748"/>
        <dbReference type="EC" id="2.1.1.205"/>
    </reaction>
</comment>
<comment type="subcellular location">
    <subcellularLocation>
        <location evidence="1">Cytoplasm</location>
    </subcellularLocation>
</comment>
<comment type="disruption phenotype">
    <text evidence="2 3">Loss of methylation of the 2'-O-ribose of cytidine at position 32 and guanosine at position 34 of the tRNA anticodon loop of tRNA(Phe) (PubMed:25404562). Increases occurrence of 1-methylguanosine residue at position 37 in the tRNA anticodon loop of tRNA(Phe) and decreases occurrence of wybutosine at this position (PubMed:25404562). Leads to activation of the general amino acid control (GAAC) response (PubMed:29596413). Slow cell population growth (PubMed:25404562). Abolishes spore germination (PubMed:25404562).</text>
</comment>
<comment type="similarity">
    <text evidence="1">Belongs to the class I-like SAM-binding methyltransferase superfamily. RNA methyltransferase RlmE family. TRM7 subfamily.</text>
</comment>
<sequence length="285" mass="31466">MGRSSKDKRDAYYRLAKEQGWRARSAFKLLQLNEQFNLFEGAKRVVDLCAAPGSWSQVLSRELLKNIDTSIAADEKPMIVAVDLQPMAPIDGVCTLQLDITHPNTLSIILSHFGNEPADLVVSDGAPDVTGLHDLDEYIQAQILLAAFNLAVCVLKPGGKFVAKIFRGRDVSLLYSQLRLMFRKVSCAKPRSSRASSIESFVVCEDFNPPSNFQPDLTKPLCVIDPTNAHEIAPFIACGDLDGYDADATYPVEINMKKATLDVIQPPTAPPYKRAIELKHSKMMS</sequence>
<accession>O36015</accession>
<keyword id="KW-0963">Cytoplasm</keyword>
<keyword id="KW-0489">Methyltransferase</keyword>
<keyword id="KW-1185">Reference proteome</keyword>
<keyword id="KW-0949">S-adenosyl-L-methionine</keyword>
<keyword id="KW-0808">Transferase</keyword>
<keyword id="KW-0819">tRNA processing</keyword>
<reference key="1">
    <citation type="journal article" date="2002" name="Nature">
        <title>The genome sequence of Schizosaccharomyces pombe.</title>
        <authorList>
            <person name="Wood V."/>
            <person name="Gwilliam R."/>
            <person name="Rajandream M.A."/>
            <person name="Lyne M.H."/>
            <person name="Lyne R."/>
            <person name="Stewart A."/>
            <person name="Sgouros J.G."/>
            <person name="Peat N."/>
            <person name="Hayles J."/>
            <person name="Baker S.G."/>
            <person name="Basham D."/>
            <person name="Bowman S."/>
            <person name="Brooks K."/>
            <person name="Brown D."/>
            <person name="Brown S."/>
            <person name="Chillingworth T."/>
            <person name="Churcher C.M."/>
            <person name="Collins M."/>
            <person name="Connor R."/>
            <person name="Cronin A."/>
            <person name="Davis P."/>
            <person name="Feltwell T."/>
            <person name="Fraser A."/>
            <person name="Gentles S."/>
            <person name="Goble A."/>
            <person name="Hamlin N."/>
            <person name="Harris D.E."/>
            <person name="Hidalgo J."/>
            <person name="Hodgson G."/>
            <person name="Holroyd S."/>
            <person name="Hornsby T."/>
            <person name="Howarth S."/>
            <person name="Huckle E.J."/>
            <person name="Hunt S."/>
            <person name="Jagels K."/>
            <person name="James K.D."/>
            <person name="Jones L."/>
            <person name="Jones M."/>
            <person name="Leather S."/>
            <person name="McDonald S."/>
            <person name="McLean J."/>
            <person name="Mooney P."/>
            <person name="Moule S."/>
            <person name="Mungall K.L."/>
            <person name="Murphy L.D."/>
            <person name="Niblett D."/>
            <person name="Odell C."/>
            <person name="Oliver K."/>
            <person name="O'Neil S."/>
            <person name="Pearson D."/>
            <person name="Quail M.A."/>
            <person name="Rabbinowitsch E."/>
            <person name="Rutherford K.M."/>
            <person name="Rutter S."/>
            <person name="Saunders D."/>
            <person name="Seeger K."/>
            <person name="Sharp S."/>
            <person name="Skelton J."/>
            <person name="Simmonds M.N."/>
            <person name="Squares R."/>
            <person name="Squares S."/>
            <person name="Stevens K."/>
            <person name="Taylor K."/>
            <person name="Taylor R.G."/>
            <person name="Tivey A."/>
            <person name="Walsh S.V."/>
            <person name="Warren T."/>
            <person name="Whitehead S."/>
            <person name="Woodward J.R."/>
            <person name="Volckaert G."/>
            <person name="Aert R."/>
            <person name="Robben J."/>
            <person name="Grymonprez B."/>
            <person name="Weltjens I."/>
            <person name="Vanstreels E."/>
            <person name="Rieger M."/>
            <person name="Schaefer M."/>
            <person name="Mueller-Auer S."/>
            <person name="Gabel C."/>
            <person name="Fuchs M."/>
            <person name="Duesterhoeft A."/>
            <person name="Fritzc C."/>
            <person name="Holzer E."/>
            <person name="Moestl D."/>
            <person name="Hilbert H."/>
            <person name="Borzym K."/>
            <person name="Langer I."/>
            <person name="Beck A."/>
            <person name="Lehrach H."/>
            <person name="Reinhardt R."/>
            <person name="Pohl T.M."/>
            <person name="Eger P."/>
            <person name="Zimmermann W."/>
            <person name="Wedler H."/>
            <person name="Wambutt R."/>
            <person name="Purnelle B."/>
            <person name="Goffeau A."/>
            <person name="Cadieu E."/>
            <person name="Dreano S."/>
            <person name="Gloux S."/>
            <person name="Lelaure V."/>
            <person name="Mottier S."/>
            <person name="Galibert F."/>
            <person name="Aves S.J."/>
            <person name="Xiang Z."/>
            <person name="Hunt C."/>
            <person name="Moore K."/>
            <person name="Hurst S.M."/>
            <person name="Lucas M."/>
            <person name="Rochet M."/>
            <person name="Gaillardin C."/>
            <person name="Tallada V.A."/>
            <person name="Garzon A."/>
            <person name="Thode G."/>
            <person name="Daga R.R."/>
            <person name="Cruzado L."/>
            <person name="Jimenez J."/>
            <person name="Sanchez M."/>
            <person name="del Rey F."/>
            <person name="Benito J."/>
            <person name="Dominguez A."/>
            <person name="Revuelta J.L."/>
            <person name="Moreno S."/>
            <person name="Armstrong J."/>
            <person name="Forsburg S.L."/>
            <person name="Cerutti L."/>
            <person name="Lowe T."/>
            <person name="McCombie W.R."/>
            <person name="Paulsen I."/>
            <person name="Potashkin J."/>
            <person name="Shpakovski G.V."/>
            <person name="Ussery D."/>
            <person name="Barrell B.G."/>
            <person name="Nurse P."/>
        </authorList>
    </citation>
    <scope>NUCLEOTIDE SEQUENCE [LARGE SCALE GENOMIC DNA]</scope>
    <source>
        <strain>972 / ATCC 24843</strain>
    </source>
</reference>
<reference key="2">
    <citation type="journal article" date="2015" name="RNA">
        <title>Conservation of an intricate circuit for crucial modifications of the tRNAPhe anticodon loop in eukaryotes.</title>
        <authorList>
            <person name="Guy M.P."/>
            <person name="Phizicky E.M."/>
        </authorList>
    </citation>
    <scope>FUNCTION</scope>
    <scope>CATALYTIC ACTIVITY</scope>
    <scope>DISRUPTION PHENOTYPE</scope>
</reference>
<reference key="3">
    <citation type="journal article" date="2018" name="PLoS Genet.">
        <title>Lack of 2'-O-methylation in the tRNA anticodon loop of two phylogenetically distant yeast species activates the general amino acid control pathway.</title>
        <authorList>
            <person name="Han L."/>
            <person name="Guy M.P."/>
            <person name="Kon Y."/>
            <person name="Phizicky E.M."/>
        </authorList>
    </citation>
    <scope>DISRUPTION PHENOTYPE</scope>
</reference>
<organism>
    <name type="scientific">Schizosaccharomyces pombe (strain 972 / ATCC 24843)</name>
    <name type="common">Fission yeast</name>
    <dbReference type="NCBI Taxonomy" id="284812"/>
    <lineage>
        <taxon>Eukaryota</taxon>
        <taxon>Fungi</taxon>
        <taxon>Dikarya</taxon>
        <taxon>Ascomycota</taxon>
        <taxon>Taphrinomycotina</taxon>
        <taxon>Schizosaccharomycetes</taxon>
        <taxon>Schizosaccharomycetales</taxon>
        <taxon>Schizosaccharomycetaceae</taxon>
        <taxon>Schizosaccharomyces</taxon>
    </lineage>
</organism>
<feature type="chain" id="PRO_0000155589" description="tRNA (cytidine(32)/guanosine(34)-2'-O)-methyltransferase">
    <location>
        <begin position="1"/>
        <end position="285"/>
    </location>
</feature>
<feature type="active site" description="Proton acceptor" evidence="1">
    <location>
        <position position="164"/>
    </location>
</feature>
<feature type="binding site" evidence="1">
    <location>
        <position position="53"/>
    </location>
    <ligand>
        <name>S-adenosyl-L-methionine</name>
        <dbReference type="ChEBI" id="CHEBI:59789"/>
    </ligand>
</feature>
<feature type="binding site" evidence="1">
    <location>
        <position position="55"/>
    </location>
    <ligand>
        <name>S-adenosyl-L-methionine</name>
        <dbReference type="ChEBI" id="CHEBI:59789"/>
    </ligand>
</feature>
<feature type="binding site" evidence="1">
    <location>
        <position position="83"/>
    </location>
    <ligand>
        <name>S-adenosyl-L-methionine</name>
        <dbReference type="ChEBI" id="CHEBI:59789"/>
    </ligand>
</feature>
<feature type="binding site" evidence="1">
    <location>
        <position position="99"/>
    </location>
    <ligand>
        <name>S-adenosyl-L-methionine</name>
        <dbReference type="ChEBI" id="CHEBI:59789"/>
    </ligand>
</feature>
<feature type="binding site" evidence="1">
    <location>
        <position position="124"/>
    </location>
    <ligand>
        <name>S-adenosyl-L-methionine</name>
        <dbReference type="ChEBI" id="CHEBI:59789"/>
    </ligand>
</feature>
<gene>
    <name evidence="6" type="primary">trm7</name>
    <name type="ORF">SPAC4F10.03c</name>
</gene>
<dbReference type="EC" id="2.1.1.205" evidence="1 5"/>
<dbReference type="EMBL" id="CU329670">
    <property type="protein sequence ID" value="CAB11724.1"/>
    <property type="molecule type" value="Genomic_DNA"/>
</dbReference>
<dbReference type="PIR" id="T38807">
    <property type="entry name" value="T38807"/>
</dbReference>
<dbReference type="RefSeq" id="NP_594746.1">
    <property type="nucleotide sequence ID" value="NM_001020173.2"/>
</dbReference>
<dbReference type="SMR" id="O36015"/>
<dbReference type="BioGRID" id="280039">
    <property type="interactions" value="1"/>
</dbReference>
<dbReference type="FunCoup" id="O36015">
    <property type="interactions" value="1396"/>
</dbReference>
<dbReference type="STRING" id="284812.O36015"/>
<dbReference type="iPTMnet" id="O36015"/>
<dbReference type="PaxDb" id="4896-SPAC4F10.03c.1"/>
<dbReference type="EnsemblFungi" id="SPAC4F10.03c.1">
    <property type="protein sequence ID" value="SPAC4F10.03c.1:pep"/>
    <property type="gene ID" value="SPAC4F10.03c"/>
</dbReference>
<dbReference type="GeneID" id="2543625"/>
<dbReference type="KEGG" id="spo:2543625"/>
<dbReference type="PomBase" id="SPAC4F10.03c">
    <property type="gene designation" value="trm7"/>
</dbReference>
<dbReference type="VEuPathDB" id="FungiDB:SPAC4F10.03c"/>
<dbReference type="eggNOG" id="KOG1099">
    <property type="taxonomic scope" value="Eukaryota"/>
</dbReference>
<dbReference type="HOGENOM" id="CLU_009422_1_2_1"/>
<dbReference type="InParanoid" id="O36015"/>
<dbReference type="OMA" id="FIVCLNF"/>
<dbReference type="PhylomeDB" id="O36015"/>
<dbReference type="PRO" id="PR:O36015"/>
<dbReference type="Proteomes" id="UP000002485">
    <property type="component" value="Chromosome I"/>
</dbReference>
<dbReference type="GO" id="GO:0005737">
    <property type="term" value="C:cytoplasm"/>
    <property type="evidence" value="ECO:0000318"/>
    <property type="project" value="GO_Central"/>
</dbReference>
<dbReference type="GO" id="GO:0005829">
    <property type="term" value="C:cytosol"/>
    <property type="evidence" value="ECO:0007005"/>
    <property type="project" value="PomBase"/>
</dbReference>
<dbReference type="GO" id="GO:0005634">
    <property type="term" value="C:nucleus"/>
    <property type="evidence" value="ECO:0007005"/>
    <property type="project" value="PomBase"/>
</dbReference>
<dbReference type="GO" id="GO:1904047">
    <property type="term" value="F:S-adenosyl-L-methionine binding"/>
    <property type="evidence" value="ECO:0000250"/>
    <property type="project" value="UniProtKB"/>
</dbReference>
<dbReference type="GO" id="GO:0106340">
    <property type="term" value="F:tRNA (cytidine(32)/guanosine(34)-2'-O)-methyltransferase activity"/>
    <property type="evidence" value="ECO:0000315"/>
    <property type="project" value="PomBase"/>
</dbReference>
<dbReference type="GO" id="GO:0016423">
    <property type="term" value="F:tRNA (guanine) methyltransferase activity"/>
    <property type="evidence" value="ECO:0000250"/>
    <property type="project" value="UniProtKB"/>
</dbReference>
<dbReference type="GO" id="GO:0106050">
    <property type="term" value="F:tRNA 2'-O-methyltransferase activity"/>
    <property type="evidence" value="ECO:0000266"/>
    <property type="project" value="PomBase"/>
</dbReference>
<dbReference type="GO" id="GO:0008175">
    <property type="term" value="F:tRNA methyltransferase activity"/>
    <property type="evidence" value="ECO:0000318"/>
    <property type="project" value="GO_Central"/>
</dbReference>
<dbReference type="GO" id="GO:0002181">
    <property type="term" value="P:cytoplasmic translation"/>
    <property type="evidence" value="ECO:0000250"/>
    <property type="project" value="UniProtKB"/>
</dbReference>
<dbReference type="GO" id="GO:0030488">
    <property type="term" value="P:tRNA methylation"/>
    <property type="evidence" value="ECO:0000315"/>
    <property type="project" value="PomBase"/>
</dbReference>
<dbReference type="GO" id="GO:0002130">
    <property type="term" value="P:wobble position ribose methylation"/>
    <property type="evidence" value="ECO:0000250"/>
    <property type="project" value="UniProtKB"/>
</dbReference>
<dbReference type="CDD" id="cd02440">
    <property type="entry name" value="AdoMet_MTases"/>
    <property type="match status" value="1"/>
</dbReference>
<dbReference type="FunFam" id="3.40.50.150:FF:000176">
    <property type="entry name" value="tRNA (cytidine(32)/guanosine(34)-2'-O)-methyltransferase"/>
    <property type="match status" value="1"/>
</dbReference>
<dbReference type="Gene3D" id="3.40.50.150">
    <property type="entry name" value="Vaccinia Virus protein VP39"/>
    <property type="match status" value="1"/>
</dbReference>
<dbReference type="HAMAP" id="MF_01547">
    <property type="entry name" value="RNA_methyltr_E"/>
    <property type="match status" value="1"/>
</dbReference>
<dbReference type="HAMAP" id="MF_03162">
    <property type="entry name" value="RNA_methyltr_E_TRM7"/>
    <property type="match status" value="1"/>
</dbReference>
<dbReference type="InterPro" id="IPR028590">
    <property type="entry name" value="RNA_methyltr_E_TRM7"/>
</dbReference>
<dbReference type="InterPro" id="IPR050082">
    <property type="entry name" value="RNA_methyltr_RlmE"/>
</dbReference>
<dbReference type="InterPro" id="IPR002877">
    <property type="entry name" value="RNA_MeTrfase_FtsJ_dom"/>
</dbReference>
<dbReference type="InterPro" id="IPR015507">
    <property type="entry name" value="rRNA-MeTfrase_E"/>
</dbReference>
<dbReference type="InterPro" id="IPR029063">
    <property type="entry name" value="SAM-dependent_MTases_sf"/>
</dbReference>
<dbReference type="PANTHER" id="PTHR10920">
    <property type="entry name" value="RIBOSOMAL RNA METHYLTRANSFERASE"/>
    <property type="match status" value="1"/>
</dbReference>
<dbReference type="PANTHER" id="PTHR10920:SF12">
    <property type="entry name" value="TRNA (CYTIDINE(32)_GUANOSINE(34)-2'-O)-METHYLTRANSFERASE-RELATED"/>
    <property type="match status" value="1"/>
</dbReference>
<dbReference type="Pfam" id="PF01728">
    <property type="entry name" value="FtsJ"/>
    <property type="match status" value="1"/>
</dbReference>
<dbReference type="SUPFAM" id="SSF53335">
    <property type="entry name" value="S-adenosyl-L-methionine-dependent methyltransferases"/>
    <property type="match status" value="1"/>
</dbReference>